<dbReference type="EC" id="2.3.1.-" evidence="5"/>
<dbReference type="EMBL" id="KM516150">
    <property type="protein sequence ID" value="AJF98582.1"/>
    <property type="molecule type" value="Genomic_DNA"/>
</dbReference>
<dbReference type="EMBL" id="CM001074">
    <property type="status" value="NOT_ANNOTATED_CDS"/>
    <property type="molecule type" value="Genomic_DNA"/>
</dbReference>
<dbReference type="RefSeq" id="NP_001362853.1">
    <property type="nucleotide sequence ID" value="NM_001375924.1"/>
</dbReference>
<dbReference type="SMR" id="K4D9Y4"/>
<dbReference type="STRING" id="4081.K4D9Y4"/>
<dbReference type="PaxDb" id="4081-Solyc11g067270.1.1"/>
<dbReference type="EnsemblPlants" id="Solyc11g067270.1.1">
    <property type="protein sequence ID" value="Solyc11g067270.1.1.1"/>
    <property type="gene ID" value="Solyc11g067270.1"/>
</dbReference>
<dbReference type="GeneID" id="101268255"/>
<dbReference type="Gramene" id="Solyc11g067270.1.1">
    <property type="protein sequence ID" value="Solyc11g067270.1.1.1"/>
    <property type="gene ID" value="Solyc11g067270.1"/>
</dbReference>
<dbReference type="eggNOG" id="ENOG502QYCI">
    <property type="taxonomic scope" value="Eukaryota"/>
</dbReference>
<dbReference type="HOGENOM" id="CLU_014546_0_0_1"/>
<dbReference type="InParanoid" id="K4D9Y4"/>
<dbReference type="OMA" id="CPMSQIL"/>
<dbReference type="OrthoDB" id="671439at2759"/>
<dbReference type="PhylomeDB" id="K4D9Y4"/>
<dbReference type="BioCyc" id="MetaCyc:MONOMER18C3-34"/>
<dbReference type="Proteomes" id="UP000004994">
    <property type="component" value="Chromosome 11"/>
</dbReference>
<dbReference type="GO" id="GO:0016746">
    <property type="term" value="F:acyltransferase activity"/>
    <property type="evidence" value="ECO:0000315"/>
    <property type="project" value="UniProtKB"/>
</dbReference>
<dbReference type="GO" id="GO:0005985">
    <property type="term" value="P:sucrose metabolic process"/>
    <property type="evidence" value="ECO:0000315"/>
    <property type="project" value="UniProtKB"/>
</dbReference>
<dbReference type="FunFam" id="3.30.559.10:FF:000063">
    <property type="entry name" value="Transferase family protein"/>
    <property type="match status" value="1"/>
</dbReference>
<dbReference type="Gene3D" id="3.30.559.10">
    <property type="entry name" value="Chloramphenicol acetyltransferase-like domain"/>
    <property type="match status" value="2"/>
</dbReference>
<dbReference type="InterPro" id="IPR023213">
    <property type="entry name" value="CAT-like_dom_sf"/>
</dbReference>
<dbReference type="PANTHER" id="PTHR31623:SF63">
    <property type="entry name" value="ACYLSUGAR ACYLTRANSFERASE 3"/>
    <property type="match status" value="1"/>
</dbReference>
<dbReference type="PANTHER" id="PTHR31623">
    <property type="entry name" value="F21J9.9"/>
    <property type="match status" value="1"/>
</dbReference>
<dbReference type="Pfam" id="PF02458">
    <property type="entry name" value="Transferase"/>
    <property type="match status" value="1"/>
</dbReference>
<organism evidence="6">
    <name type="scientific">Solanum lycopersicum</name>
    <name type="common">Tomato</name>
    <name type="synonym">Lycopersicon esculentum</name>
    <dbReference type="NCBI Taxonomy" id="4081"/>
    <lineage>
        <taxon>Eukaryota</taxon>
        <taxon>Viridiplantae</taxon>
        <taxon>Streptophyta</taxon>
        <taxon>Embryophyta</taxon>
        <taxon>Tracheophyta</taxon>
        <taxon>Spermatophyta</taxon>
        <taxon>Magnoliopsida</taxon>
        <taxon>eudicotyledons</taxon>
        <taxon>Gunneridae</taxon>
        <taxon>Pentapetalae</taxon>
        <taxon>asterids</taxon>
        <taxon>lamiids</taxon>
        <taxon>Solanales</taxon>
        <taxon>Solanaceae</taxon>
        <taxon>Solanoideae</taxon>
        <taxon>Solaneae</taxon>
        <taxon>Solanum</taxon>
        <taxon>Solanum subgen. Lycopersicon</taxon>
    </lineage>
</organism>
<evidence type="ECO:0000250" key="1">
    <source>
        <dbReference type="UniProtKB" id="Q70PR7"/>
    </source>
</evidence>
<evidence type="ECO:0000255" key="2"/>
<evidence type="ECO:0000269" key="3">
    <source>
    </source>
</evidence>
<evidence type="ECO:0000303" key="4">
    <source>
    </source>
</evidence>
<evidence type="ECO:0000305" key="5"/>
<evidence type="ECO:0000312" key="6">
    <source>
        <dbReference type="Proteomes" id="UP000004994"/>
    </source>
</evidence>
<comment type="function">
    <text evidence="3">Catalyzes the transfer of short (four to five carbons) branched acyl chains to the furanose ring of di-acylsucrose acceptors to produce tri-acylsucroses such as S3:15 (5,5,5), S4:17 (2,5,5,5) and S4:24 (2,5,5,12) acylsucroses.</text>
</comment>
<comment type="subunit">
    <text evidence="1">Monomer.</text>
</comment>
<comment type="tissue specificity">
    <text evidence="3">Expressed in tip cells of type I trichomes of stems and petioles, sites of acylsugars production.</text>
</comment>
<comment type="disruption phenotype">
    <text evidence="3">Reduced total acylsugar levels, with abnormal accumulation of di-acylsucrose, S2:17 (5,12), and two triacylsucroses, S3:19 (2,5,12) and S3:22 (5,5,12) lacking furanose ring acylation, but impaired accumulation of S3:15 (5,5,5), S4:17 (2,5,5,5) and S4:24 (2,5,5,12) acylsucroses.</text>
</comment>
<comment type="similarity">
    <text evidence="5">Belongs to the plant acyltransferase family.</text>
</comment>
<accession>K4D9Y4</accession>
<feature type="chain" id="PRO_0000433637" description="Acylsugar acyltransferase 3">
    <location>
        <begin position="1"/>
        <end position="430"/>
    </location>
</feature>
<feature type="active site" description="Proton acceptor" evidence="2">
    <location>
        <position position="155"/>
    </location>
</feature>
<feature type="active site" description="Proton acceptor" evidence="2">
    <location>
        <position position="367"/>
    </location>
</feature>
<protein>
    <recommendedName>
        <fullName evidence="4">Acylsugar acyltransferase 3</fullName>
        <shortName evidence="4">Sl-ASAT3</shortName>
        <ecNumber evidence="5">2.3.1.-</ecNumber>
    </recommendedName>
</protein>
<name>ASAT3_SOLLC</name>
<reference key="1">
    <citation type="journal article" date="2015" name="Plant Cell">
        <title>Functionally divergent alleles and duplicated Loci encoding an acyltransferase contribute to acylsugar metabolite diversity in solanum trichomes.</title>
        <authorList>
            <person name="Schilmiller A.L."/>
            <person name="Moghe G.D."/>
            <person name="Fan P."/>
            <person name="Ghosh B."/>
            <person name="Ning J."/>
            <person name="Jones A.D."/>
            <person name="Last R.L."/>
        </authorList>
    </citation>
    <scope>NUCLEOTIDE SEQUENCE [GENOMIC DNA]</scope>
    <scope>FUNCTION</scope>
    <scope>DISRUPTION PHENOTYPE</scope>
    <scope>TISSUE SPECIFICITY</scope>
    <source>
        <strain>cv. M82</strain>
    </source>
</reference>
<reference key="2">
    <citation type="journal article" date="2012" name="Nature">
        <title>The tomato genome sequence provides insights into fleshy fruit evolution.</title>
        <authorList>
            <consortium name="Tomato Genome Consortium"/>
        </authorList>
    </citation>
    <scope>NUCLEOTIDE SEQUENCE [LARGE SCALE GENOMIC DNA]</scope>
    <source>
        <strain>cv. Heinz 1706</strain>
    </source>
</reference>
<keyword id="KW-0012">Acyltransferase</keyword>
<keyword id="KW-1185">Reference proteome</keyword>
<keyword id="KW-0808">Transferase</keyword>
<gene>
    <name evidence="4" type="primary">ASAT3</name>
    <name type="ordered locus">Solyc11g067270.1</name>
</gene>
<proteinExistence type="evidence at transcript level"/>
<sequence length="430" mass="48370">MASSTIISRKMIKLLSPTPSSLRCHKLSFMDHINFPLHSPYAFFYPKIPQNYSNKISQVLENSLSKVLSFYYPLAGKINNNYTYVDCNDTGAEYLNVRIDCPMSQILNHPYNDVVDVVFPQDLPWSSSSLTRSPLVVQLSHFDCGGVAVSACTSHTIFDGYCLSKFINDWASTARNMEFKPSPQFNASTFFPLPSETNLSSTLPATRPSQRHVSRMYNFSSSNLTRLKDIVTKESHVKNPTRVEVASALVHKCGVTMSMESSGMFKPTLMSHAMNLRPPIPLNTMGNATCIILTTAMTEDEVKLPNFVAKLQKDKQQLRDKLKDMKEDRMPLYTLELGKNAMNIIEKDTHDVYLCSGMTNTGLHKIDFGWGEPVRVTLATHPNKNNFIFMDEQSGDGLNVLITLTKDDMLKFQSNKELLEFASPVVESTK</sequence>